<dbReference type="EC" id="3.1.27.-"/>
<dbReference type="EMBL" id="AF479627">
    <property type="protein sequence ID" value="AAM14434.1"/>
    <property type="molecule type" value="Genomic_DNA"/>
</dbReference>
<dbReference type="SMR" id="Q8SPY9"/>
<dbReference type="STRING" id="9545.ENSMNEP00000000327"/>
<dbReference type="GlyCosmos" id="Q8SPY9">
    <property type="glycosylation" value="3 sites, No reported glycans"/>
</dbReference>
<dbReference type="Proteomes" id="UP000233120">
    <property type="component" value="Unassembled WGS sequence"/>
</dbReference>
<dbReference type="GO" id="GO:0005615">
    <property type="term" value="C:extracellular space"/>
    <property type="evidence" value="ECO:0007669"/>
    <property type="project" value="TreeGrafter"/>
</dbReference>
<dbReference type="GO" id="GO:0004519">
    <property type="term" value="F:endonuclease activity"/>
    <property type="evidence" value="ECO:0007669"/>
    <property type="project" value="UniProtKB-KW"/>
</dbReference>
<dbReference type="GO" id="GO:0003676">
    <property type="term" value="F:nucleic acid binding"/>
    <property type="evidence" value="ECO:0007669"/>
    <property type="project" value="InterPro"/>
</dbReference>
<dbReference type="GO" id="GO:0004540">
    <property type="term" value="F:RNA nuclease activity"/>
    <property type="evidence" value="ECO:0007669"/>
    <property type="project" value="TreeGrafter"/>
</dbReference>
<dbReference type="GO" id="GO:0006935">
    <property type="term" value="P:chemotaxis"/>
    <property type="evidence" value="ECO:0007669"/>
    <property type="project" value="TreeGrafter"/>
</dbReference>
<dbReference type="GO" id="GO:0050830">
    <property type="term" value="P:defense response to Gram-positive bacterium"/>
    <property type="evidence" value="ECO:0007669"/>
    <property type="project" value="TreeGrafter"/>
</dbReference>
<dbReference type="GO" id="GO:0002227">
    <property type="term" value="P:innate immune response in mucosa"/>
    <property type="evidence" value="ECO:0007669"/>
    <property type="project" value="TreeGrafter"/>
</dbReference>
<dbReference type="CDD" id="cd06265">
    <property type="entry name" value="RNase_A_canonical"/>
    <property type="match status" value="1"/>
</dbReference>
<dbReference type="FunFam" id="3.10.130.10:FF:000001">
    <property type="entry name" value="Ribonuclease pancreatic"/>
    <property type="match status" value="1"/>
</dbReference>
<dbReference type="Gene3D" id="3.10.130.10">
    <property type="entry name" value="Ribonuclease A-like domain"/>
    <property type="match status" value="1"/>
</dbReference>
<dbReference type="InterPro" id="IPR001427">
    <property type="entry name" value="RNaseA"/>
</dbReference>
<dbReference type="InterPro" id="IPR036816">
    <property type="entry name" value="RNaseA-like_dom_sf"/>
</dbReference>
<dbReference type="InterPro" id="IPR023411">
    <property type="entry name" value="RNaseA_AS"/>
</dbReference>
<dbReference type="InterPro" id="IPR023412">
    <property type="entry name" value="RNaseA_domain"/>
</dbReference>
<dbReference type="PANTHER" id="PTHR11437:SF3">
    <property type="entry name" value="EOSINOPHIL CATIONIC PROTEIN"/>
    <property type="match status" value="1"/>
</dbReference>
<dbReference type="PANTHER" id="PTHR11437">
    <property type="entry name" value="RIBONUCLEASE"/>
    <property type="match status" value="1"/>
</dbReference>
<dbReference type="Pfam" id="PF00074">
    <property type="entry name" value="RnaseA"/>
    <property type="match status" value="1"/>
</dbReference>
<dbReference type="PRINTS" id="PR00794">
    <property type="entry name" value="RIBONUCLEASE"/>
</dbReference>
<dbReference type="SMART" id="SM00092">
    <property type="entry name" value="RNAse_Pc"/>
    <property type="match status" value="1"/>
</dbReference>
<dbReference type="SUPFAM" id="SSF54076">
    <property type="entry name" value="RNase A-like"/>
    <property type="match status" value="1"/>
</dbReference>
<dbReference type="PROSITE" id="PS00127">
    <property type="entry name" value="RNASE_PANCREATIC"/>
    <property type="match status" value="1"/>
</dbReference>
<sequence>MVPKLFTPQICLLLLLGLMGVEGSLHARPPQFTKAQWFAIQHINVNPPRCTIAMRVINNYQRRCKNQNTFLRTTFANTVNVCRNRSIRCPRNRTLHNCHRSSYRVPLLHCDLINPGAQNISTCRYADRPGRRFYVVACESRDPRDSPRYPVVPVHLDTII</sequence>
<protein>
    <recommendedName>
        <fullName>Eosinophil cationic protein</fullName>
        <shortName>ECP</shortName>
        <ecNumber>3.1.27.-</ecNumber>
    </recommendedName>
    <alternativeName>
        <fullName>Ribonuclease 3</fullName>
        <shortName>RNase 3</shortName>
    </alternativeName>
</protein>
<name>ECP_MACNE</name>
<keyword id="KW-1015">Disulfide bond</keyword>
<keyword id="KW-0255">Endonuclease</keyword>
<keyword id="KW-0325">Glycoprotein</keyword>
<keyword id="KW-0378">Hydrolase</keyword>
<keyword id="KW-0944">Nitration</keyword>
<keyword id="KW-0540">Nuclease</keyword>
<keyword id="KW-1185">Reference proteome</keyword>
<keyword id="KW-0964">Secreted</keyword>
<keyword id="KW-0732">Signal</keyword>
<feature type="signal peptide" evidence="1">
    <location>
        <begin position="1"/>
        <end position="27"/>
    </location>
</feature>
<feature type="chain" id="PRO_0000251794" description="Eosinophil cationic protein">
    <location>
        <begin position="28"/>
        <end position="160"/>
    </location>
</feature>
<feature type="region of interest" description="Required for nearly all of the bactericidal activities; partially involved in LPS-binding" evidence="1">
    <location>
        <begin position="28"/>
        <end position="72"/>
    </location>
</feature>
<feature type="active site" description="Proton acceptor" evidence="1">
    <location>
        <position position="42"/>
    </location>
</feature>
<feature type="active site" description="Proton donor" evidence="1">
    <location>
        <position position="155"/>
    </location>
</feature>
<feature type="binding site" evidence="1">
    <location>
        <begin position="65"/>
        <end position="69"/>
    </location>
    <ligand>
        <name>substrate</name>
    </ligand>
</feature>
<feature type="modified residue" description="3'-nitrotyrosine" evidence="2">
    <location>
        <position position="60"/>
    </location>
</feature>
<feature type="glycosylation site" description="N-linked (GlcNAc...) asparagine" evidence="3">
    <location>
        <position position="84"/>
    </location>
</feature>
<feature type="glycosylation site" description="N-linked (GlcNAc...) asparagine" evidence="3">
    <location>
        <position position="92"/>
    </location>
</feature>
<feature type="glycosylation site" description="N-linked (GlcNAc...) asparagine" evidence="3">
    <location>
        <position position="119"/>
    </location>
</feature>
<feature type="disulfide bond" evidence="1">
    <location>
        <begin position="50"/>
        <end position="110"/>
    </location>
</feature>
<feature type="disulfide bond" evidence="1">
    <location>
        <begin position="64"/>
        <end position="123"/>
    </location>
</feature>
<feature type="disulfide bond" evidence="1">
    <location>
        <begin position="82"/>
        <end position="138"/>
    </location>
</feature>
<feature type="disulfide bond" evidence="1">
    <location>
        <begin position="89"/>
        <end position="98"/>
    </location>
</feature>
<reference key="1">
    <citation type="journal article" date="2002" name="Proc. Natl. Acad. Sci. U.S.A.">
        <title>Complementary advantageous substitutions in the evolution of an antiviral RNase of higher primates.</title>
        <authorList>
            <person name="Zhang J."/>
            <person name="Rosenberg H.F."/>
        </authorList>
    </citation>
    <scope>NUCLEOTIDE SEQUENCE [GENOMIC DNA]</scope>
</reference>
<comment type="function">
    <text evidence="1">Cytotoxin and helminthotoxin with low-efficiency ribonuclease activity. Possesses a wide variety of biological activities. Exhibits antibacterial activity (By similarity).</text>
</comment>
<comment type="subunit">
    <text evidence="1">Interacts with bacterial lipopolysaccharide (LPS) and lipoteichoic acid (LTA). In vitro interacts with phospholipid bilayers.</text>
</comment>
<comment type="subcellular location">
    <subcellularLocation>
        <location evidence="1">Secreted</location>
    </subcellularLocation>
    <text evidence="1">Located in the matrix of eosinophil large specific granule, which are released following activation by an immune stimulus.</text>
</comment>
<comment type="similarity">
    <text evidence="4">Belongs to the pancreatic ribonuclease family.</text>
</comment>
<gene>
    <name type="primary">RNASE3</name>
    <name type="synonym">ECP</name>
    <name type="synonym">RNS3</name>
</gene>
<accession>Q8SPY9</accession>
<evidence type="ECO:0000250" key="1"/>
<evidence type="ECO:0000250" key="2">
    <source>
        <dbReference type="UniProtKB" id="P12724"/>
    </source>
</evidence>
<evidence type="ECO:0000255" key="3"/>
<evidence type="ECO:0000305" key="4"/>
<proteinExistence type="inferred from homology"/>
<organism>
    <name type="scientific">Macaca nemestrina</name>
    <name type="common">Pig-tailed macaque</name>
    <dbReference type="NCBI Taxonomy" id="9545"/>
    <lineage>
        <taxon>Eukaryota</taxon>
        <taxon>Metazoa</taxon>
        <taxon>Chordata</taxon>
        <taxon>Craniata</taxon>
        <taxon>Vertebrata</taxon>
        <taxon>Euteleostomi</taxon>
        <taxon>Mammalia</taxon>
        <taxon>Eutheria</taxon>
        <taxon>Euarchontoglires</taxon>
        <taxon>Primates</taxon>
        <taxon>Haplorrhini</taxon>
        <taxon>Catarrhini</taxon>
        <taxon>Cercopithecidae</taxon>
        <taxon>Cercopithecinae</taxon>
        <taxon>Macaca</taxon>
    </lineage>
</organism>